<dbReference type="EC" id="2.7.11.1"/>
<dbReference type="EMBL" id="U38481">
    <property type="protein sequence ID" value="AAB37540.1"/>
    <property type="status" value="ALT_INIT"/>
    <property type="molecule type" value="mRNA"/>
</dbReference>
<dbReference type="RefSeq" id="NP_037154.2">
    <property type="nucleotide sequence ID" value="NM_013022.2"/>
</dbReference>
<dbReference type="PDB" id="2ROV">
    <property type="method" value="NMR"/>
    <property type="chains" value="A=1151-1351"/>
</dbReference>
<dbReference type="PDB" id="2ROW">
    <property type="method" value="NMR"/>
    <property type="chains" value="A=1237-1320"/>
</dbReference>
<dbReference type="PDBsum" id="2ROV"/>
<dbReference type="PDBsum" id="2ROW"/>
<dbReference type="SMR" id="Q62868"/>
<dbReference type="BioGRID" id="247569">
    <property type="interactions" value="3"/>
</dbReference>
<dbReference type="FunCoup" id="Q62868">
    <property type="interactions" value="2996"/>
</dbReference>
<dbReference type="IntAct" id="Q62868">
    <property type="interactions" value="5"/>
</dbReference>
<dbReference type="MINT" id="Q62868"/>
<dbReference type="STRING" id="10116.ENSRNOP00000073496"/>
<dbReference type="BindingDB" id="Q62868"/>
<dbReference type="ChEMBL" id="CHEMBL5490"/>
<dbReference type="DrugCentral" id="Q62868"/>
<dbReference type="GuidetoPHARMACOLOGY" id="1504"/>
<dbReference type="iPTMnet" id="Q62868"/>
<dbReference type="PhosphoSitePlus" id="Q62868"/>
<dbReference type="jPOST" id="Q62868"/>
<dbReference type="PaxDb" id="10116-ENSRNOP00000006403"/>
<dbReference type="GeneID" id="25537"/>
<dbReference type="KEGG" id="rno:25537"/>
<dbReference type="AGR" id="RGD:3590"/>
<dbReference type="CTD" id="9475"/>
<dbReference type="RGD" id="3590">
    <property type="gene designation" value="Rock2"/>
</dbReference>
<dbReference type="eggNOG" id="KOG0612">
    <property type="taxonomic scope" value="Eukaryota"/>
</dbReference>
<dbReference type="InParanoid" id="Q62868"/>
<dbReference type="Reactome" id="R-RNO-3928662">
    <property type="pathway name" value="EPHB-mediated forward signaling"/>
</dbReference>
<dbReference type="Reactome" id="R-RNO-416482">
    <property type="pathway name" value="G alpha (12/13) signalling events"/>
</dbReference>
<dbReference type="Reactome" id="R-RNO-416572">
    <property type="pathway name" value="Sema4D induced cell migration and growth-cone collapse"/>
</dbReference>
<dbReference type="Reactome" id="R-RNO-4420097">
    <property type="pathway name" value="VEGFA-VEGFR2 Pathway"/>
</dbReference>
<dbReference type="Reactome" id="R-RNO-5627117">
    <property type="pathway name" value="RHO GTPases Activate ROCKs"/>
</dbReference>
<dbReference type="Reactome" id="R-RNO-8980692">
    <property type="pathway name" value="RHOA GTPase cycle"/>
</dbReference>
<dbReference type="Reactome" id="R-RNO-9013026">
    <property type="pathway name" value="RHOB GTPase cycle"/>
</dbReference>
<dbReference type="Reactome" id="R-RNO-9013407">
    <property type="pathway name" value="RHOH GTPase cycle"/>
</dbReference>
<dbReference type="Reactome" id="R-RNO-9013422">
    <property type="pathway name" value="RHOBTB1 GTPase cycle"/>
</dbReference>
<dbReference type="EvolutionaryTrace" id="Q62868"/>
<dbReference type="PRO" id="PR:Q62868"/>
<dbReference type="Proteomes" id="UP000002494">
    <property type="component" value="Unplaced"/>
</dbReference>
<dbReference type="GO" id="GO:0005813">
    <property type="term" value="C:centrosome"/>
    <property type="evidence" value="ECO:0000266"/>
    <property type="project" value="RGD"/>
</dbReference>
<dbReference type="GO" id="GO:0005737">
    <property type="term" value="C:cytoplasm"/>
    <property type="evidence" value="ECO:0000266"/>
    <property type="project" value="RGD"/>
</dbReference>
<dbReference type="GO" id="GO:0036464">
    <property type="term" value="C:cytoplasmic ribonucleoprotein granule"/>
    <property type="evidence" value="ECO:0000266"/>
    <property type="project" value="RGD"/>
</dbReference>
<dbReference type="GO" id="GO:0005856">
    <property type="term" value="C:cytoskeleton"/>
    <property type="evidence" value="ECO:0000318"/>
    <property type="project" value="GO_Central"/>
</dbReference>
<dbReference type="GO" id="GO:0098978">
    <property type="term" value="C:glutamatergic synapse"/>
    <property type="evidence" value="ECO:0000266"/>
    <property type="project" value="RGD"/>
</dbReference>
<dbReference type="GO" id="GO:0031594">
    <property type="term" value="C:neuromuscular junction"/>
    <property type="evidence" value="ECO:0000266"/>
    <property type="project" value="RGD"/>
</dbReference>
<dbReference type="GO" id="GO:0005634">
    <property type="term" value="C:nucleus"/>
    <property type="evidence" value="ECO:0007669"/>
    <property type="project" value="UniProtKB-SubCell"/>
</dbReference>
<dbReference type="GO" id="GO:0005886">
    <property type="term" value="C:plasma membrane"/>
    <property type="evidence" value="ECO:0007669"/>
    <property type="project" value="UniProtKB-SubCell"/>
</dbReference>
<dbReference type="GO" id="GO:0014069">
    <property type="term" value="C:postsynaptic density"/>
    <property type="evidence" value="ECO:0000266"/>
    <property type="project" value="RGD"/>
</dbReference>
<dbReference type="GO" id="GO:0048786">
    <property type="term" value="C:presynaptic active zone"/>
    <property type="evidence" value="ECO:0000266"/>
    <property type="project" value="RGD"/>
</dbReference>
<dbReference type="GO" id="GO:0098685">
    <property type="term" value="C:Schaffer collateral - CA1 synapse"/>
    <property type="evidence" value="ECO:0000266"/>
    <property type="project" value="RGD"/>
</dbReference>
<dbReference type="GO" id="GO:0031616">
    <property type="term" value="C:spindle pole centrosome"/>
    <property type="evidence" value="ECO:0000266"/>
    <property type="project" value="RGD"/>
</dbReference>
<dbReference type="GO" id="GO:0005524">
    <property type="term" value="F:ATP binding"/>
    <property type="evidence" value="ECO:0007669"/>
    <property type="project" value="UniProtKB-KW"/>
</dbReference>
<dbReference type="GO" id="GO:0061133">
    <property type="term" value="F:endopeptidase activator activity"/>
    <property type="evidence" value="ECO:0000266"/>
    <property type="project" value="RGD"/>
</dbReference>
<dbReference type="GO" id="GO:0016301">
    <property type="term" value="F:kinase activity"/>
    <property type="evidence" value="ECO:0000304"/>
    <property type="project" value="RGD"/>
</dbReference>
<dbReference type="GO" id="GO:0002020">
    <property type="term" value="F:protease binding"/>
    <property type="evidence" value="ECO:0000266"/>
    <property type="project" value="RGD"/>
</dbReference>
<dbReference type="GO" id="GO:0004672">
    <property type="term" value="F:protein kinase activity"/>
    <property type="evidence" value="ECO:0000266"/>
    <property type="project" value="RGD"/>
</dbReference>
<dbReference type="GO" id="GO:0106310">
    <property type="term" value="F:protein serine kinase activity"/>
    <property type="evidence" value="ECO:0007669"/>
    <property type="project" value="RHEA"/>
</dbReference>
<dbReference type="GO" id="GO:0004674">
    <property type="term" value="F:protein serine/threonine kinase activity"/>
    <property type="evidence" value="ECO:0000266"/>
    <property type="project" value="RGD"/>
</dbReference>
<dbReference type="GO" id="GO:0072518">
    <property type="term" value="F:Rho-dependent protein serine/threonine kinase activity"/>
    <property type="evidence" value="ECO:0000266"/>
    <property type="project" value="RGD"/>
</dbReference>
<dbReference type="GO" id="GO:0031267">
    <property type="term" value="F:small GTPase binding"/>
    <property type="evidence" value="ECO:0007669"/>
    <property type="project" value="InterPro"/>
</dbReference>
<dbReference type="GO" id="GO:0008270">
    <property type="term" value="F:zinc ion binding"/>
    <property type="evidence" value="ECO:0007669"/>
    <property type="project" value="UniProtKB-KW"/>
</dbReference>
<dbReference type="GO" id="GO:0030036">
    <property type="term" value="P:actin cytoskeleton organization"/>
    <property type="evidence" value="ECO:0000266"/>
    <property type="project" value="RGD"/>
</dbReference>
<dbReference type="GO" id="GO:0031032">
    <property type="term" value="P:actomyosin structure organization"/>
    <property type="evidence" value="ECO:0000318"/>
    <property type="project" value="GO_Central"/>
</dbReference>
<dbReference type="GO" id="GO:0003180">
    <property type="term" value="P:aortic valve morphogenesis"/>
    <property type="evidence" value="ECO:0000266"/>
    <property type="project" value="RGD"/>
</dbReference>
<dbReference type="GO" id="GO:0097746">
    <property type="term" value="P:blood vessel diameter maintenance"/>
    <property type="evidence" value="ECO:0000266"/>
    <property type="project" value="RGD"/>
</dbReference>
<dbReference type="GO" id="GO:1905145">
    <property type="term" value="P:cellular response to acetylcholine"/>
    <property type="evidence" value="ECO:0000266"/>
    <property type="project" value="RGD"/>
</dbReference>
<dbReference type="GO" id="GO:0071394">
    <property type="term" value="P:cellular response to testosterone stimulus"/>
    <property type="evidence" value="ECO:0000266"/>
    <property type="project" value="RGD"/>
</dbReference>
<dbReference type="GO" id="GO:0071560">
    <property type="term" value="P:cellular response to transforming growth factor beta stimulus"/>
    <property type="evidence" value="ECO:0000266"/>
    <property type="project" value="RGD"/>
</dbReference>
<dbReference type="GO" id="GO:0051298">
    <property type="term" value="P:centrosome duplication"/>
    <property type="evidence" value="ECO:0000266"/>
    <property type="project" value="RGD"/>
</dbReference>
<dbReference type="GO" id="GO:0030261">
    <property type="term" value="P:chromosome condensation"/>
    <property type="evidence" value="ECO:0000304"/>
    <property type="project" value="RGD"/>
</dbReference>
<dbReference type="GO" id="GO:0030866">
    <property type="term" value="P:cortical actin cytoskeleton organization"/>
    <property type="evidence" value="ECO:0000318"/>
    <property type="project" value="GO_Central"/>
</dbReference>
<dbReference type="GO" id="GO:0048813">
    <property type="term" value="P:dendrite morphogenesis"/>
    <property type="evidence" value="ECO:0000266"/>
    <property type="project" value="RGD"/>
</dbReference>
<dbReference type="GO" id="GO:0048598">
    <property type="term" value="P:embryonic morphogenesis"/>
    <property type="evidence" value="ECO:0000318"/>
    <property type="project" value="GO_Central"/>
</dbReference>
<dbReference type="GO" id="GO:0001837">
    <property type="term" value="P:epithelial to mesenchymal transition"/>
    <property type="evidence" value="ECO:0000266"/>
    <property type="project" value="RGD"/>
</dbReference>
<dbReference type="GO" id="GO:0008625">
    <property type="term" value="P:extrinsic apoptotic signaling pathway via death domain receptors"/>
    <property type="evidence" value="ECO:0000266"/>
    <property type="project" value="RGD"/>
</dbReference>
<dbReference type="GO" id="GO:0000281">
    <property type="term" value="P:mitotic cytokinesis"/>
    <property type="evidence" value="ECO:0000318"/>
    <property type="project" value="GO_Central"/>
</dbReference>
<dbReference type="GO" id="GO:0061157">
    <property type="term" value="P:mRNA destabilization"/>
    <property type="evidence" value="ECO:0000266"/>
    <property type="project" value="RGD"/>
</dbReference>
<dbReference type="GO" id="GO:0016525">
    <property type="term" value="P:negative regulation of angiogenesis"/>
    <property type="evidence" value="ECO:0000266"/>
    <property type="project" value="RGD"/>
</dbReference>
<dbReference type="GO" id="GO:1903347">
    <property type="term" value="P:negative regulation of bicellular tight junction assembly"/>
    <property type="evidence" value="ECO:0000266"/>
    <property type="project" value="RGD"/>
</dbReference>
<dbReference type="GO" id="GO:0070168">
    <property type="term" value="P:negative regulation of biomineral tissue development"/>
    <property type="evidence" value="ECO:0000266"/>
    <property type="project" value="RGD"/>
</dbReference>
<dbReference type="GO" id="GO:0010629">
    <property type="term" value="P:negative regulation of gene expression"/>
    <property type="evidence" value="ECO:0000266"/>
    <property type="project" value="RGD"/>
</dbReference>
<dbReference type="GO" id="GO:0045019">
    <property type="term" value="P:negative regulation of nitric oxide biosynthetic process"/>
    <property type="evidence" value="ECO:0000266"/>
    <property type="project" value="RGD"/>
</dbReference>
<dbReference type="GO" id="GO:0150033">
    <property type="term" value="P:negative regulation of protein localization to lysosome"/>
    <property type="evidence" value="ECO:0000266"/>
    <property type="project" value="RGD"/>
</dbReference>
<dbReference type="GO" id="GO:0001843">
    <property type="term" value="P:neural tube closure"/>
    <property type="evidence" value="ECO:0000266"/>
    <property type="project" value="RGD"/>
</dbReference>
<dbReference type="GO" id="GO:1902993">
    <property type="term" value="P:positive regulation of amyloid precursor protein catabolic process"/>
    <property type="evidence" value="ECO:0000266"/>
    <property type="project" value="RGD"/>
</dbReference>
<dbReference type="GO" id="GO:1902004">
    <property type="term" value="P:positive regulation of amyloid-beta formation"/>
    <property type="evidence" value="ECO:0000266"/>
    <property type="project" value="RGD"/>
</dbReference>
<dbReference type="GO" id="GO:0010613">
    <property type="term" value="P:positive regulation of cardiac muscle hypertrophy"/>
    <property type="evidence" value="ECO:0000315"/>
    <property type="project" value="ARUK-UCL"/>
</dbReference>
<dbReference type="GO" id="GO:0030335">
    <property type="term" value="P:positive regulation of cell migration"/>
    <property type="evidence" value="ECO:0000266"/>
    <property type="project" value="RGD"/>
</dbReference>
<dbReference type="GO" id="GO:0010825">
    <property type="term" value="P:positive regulation of centrosome duplication"/>
    <property type="evidence" value="ECO:0000266"/>
    <property type="project" value="RGD"/>
</dbReference>
<dbReference type="GO" id="GO:0032723">
    <property type="term" value="P:positive regulation of connective tissue growth factor production"/>
    <property type="evidence" value="ECO:0000315"/>
    <property type="project" value="ARUK-UCL"/>
</dbReference>
<dbReference type="GO" id="GO:1905205">
    <property type="term" value="P:positive regulation of connective tissue replacement"/>
    <property type="evidence" value="ECO:0000315"/>
    <property type="project" value="ARUK-UCL"/>
</dbReference>
<dbReference type="GO" id="GO:0010595">
    <property type="term" value="P:positive regulation of endothelial cell migration"/>
    <property type="evidence" value="ECO:0000266"/>
    <property type="project" value="RGD"/>
</dbReference>
<dbReference type="GO" id="GO:0090271">
    <property type="term" value="P:positive regulation of fibroblast growth factor production"/>
    <property type="evidence" value="ECO:0000315"/>
    <property type="project" value="ARUK-UCL"/>
</dbReference>
<dbReference type="GO" id="GO:0010628">
    <property type="term" value="P:positive regulation of gene expression"/>
    <property type="evidence" value="ECO:0000315"/>
    <property type="project" value="ARUK-UCL"/>
</dbReference>
<dbReference type="GO" id="GO:0043410">
    <property type="term" value="P:positive regulation of MAPK cascade"/>
    <property type="evidence" value="ECO:0000266"/>
    <property type="project" value="RGD"/>
</dbReference>
<dbReference type="GO" id="GO:1902966">
    <property type="term" value="P:positive regulation of protein localization to early endosome"/>
    <property type="evidence" value="ECO:0000266"/>
    <property type="project" value="RGD"/>
</dbReference>
<dbReference type="GO" id="GO:1900182">
    <property type="term" value="P:positive regulation of protein localization to nucleus"/>
    <property type="evidence" value="ECO:0000266"/>
    <property type="project" value="RGD"/>
</dbReference>
<dbReference type="GO" id="GO:0051496">
    <property type="term" value="P:positive regulation of stress fiber assembly"/>
    <property type="evidence" value="ECO:0000266"/>
    <property type="project" value="RGD"/>
</dbReference>
<dbReference type="GO" id="GO:0098974">
    <property type="term" value="P:postsynaptic actin cytoskeleton organization"/>
    <property type="evidence" value="ECO:0000266"/>
    <property type="project" value="RGD"/>
</dbReference>
<dbReference type="GO" id="GO:0072659">
    <property type="term" value="P:protein localization to plasma membrane"/>
    <property type="evidence" value="ECO:0000266"/>
    <property type="project" value="RGD"/>
</dbReference>
<dbReference type="GO" id="GO:0032956">
    <property type="term" value="P:regulation of actin cytoskeleton organization"/>
    <property type="evidence" value="ECO:0000318"/>
    <property type="project" value="GO_Central"/>
</dbReference>
<dbReference type="GO" id="GO:0110061">
    <property type="term" value="P:regulation of angiotensin-activated signaling pathway"/>
    <property type="evidence" value="ECO:0000266"/>
    <property type="project" value="RGD"/>
</dbReference>
<dbReference type="GO" id="GO:1901888">
    <property type="term" value="P:regulation of cell junction assembly"/>
    <property type="evidence" value="ECO:0000318"/>
    <property type="project" value="GO_Central"/>
</dbReference>
<dbReference type="GO" id="GO:1900037">
    <property type="term" value="P:regulation of cellular response to hypoxia"/>
    <property type="evidence" value="ECO:0000266"/>
    <property type="project" value="RGD"/>
</dbReference>
<dbReference type="GO" id="GO:0042752">
    <property type="term" value="P:regulation of circadian rhythm"/>
    <property type="evidence" value="ECO:0000250"/>
    <property type="project" value="UniProtKB"/>
</dbReference>
<dbReference type="GO" id="GO:1903140">
    <property type="term" value="P:regulation of establishment of endothelial barrier"/>
    <property type="evidence" value="ECO:0000266"/>
    <property type="project" value="RGD"/>
</dbReference>
<dbReference type="GO" id="GO:0045616">
    <property type="term" value="P:regulation of keratinocyte differentiation"/>
    <property type="evidence" value="ECO:0000266"/>
    <property type="project" value="RGD"/>
</dbReference>
<dbReference type="GO" id="GO:0031644">
    <property type="term" value="P:regulation of nervous system process"/>
    <property type="evidence" value="ECO:0000266"/>
    <property type="project" value="RGD"/>
</dbReference>
<dbReference type="GO" id="GO:0090128">
    <property type="term" value="P:regulation of synapse maturation"/>
    <property type="evidence" value="ECO:0000266"/>
    <property type="project" value="RGD"/>
</dbReference>
<dbReference type="GO" id="GO:1990776">
    <property type="term" value="P:response to angiotensin"/>
    <property type="evidence" value="ECO:0000266"/>
    <property type="project" value="RGD"/>
</dbReference>
<dbReference type="GO" id="GO:0002931">
    <property type="term" value="P:response to ischemia"/>
    <property type="evidence" value="ECO:0000266"/>
    <property type="project" value="RGD"/>
</dbReference>
<dbReference type="GO" id="GO:0071559">
    <property type="term" value="P:response to transforming growth factor beta"/>
    <property type="evidence" value="ECO:0000316"/>
    <property type="project" value="ARUK-UCL"/>
</dbReference>
<dbReference type="GO" id="GO:0007266">
    <property type="term" value="P:Rho protein signal transduction"/>
    <property type="evidence" value="ECO:0000315"/>
    <property type="project" value="MGI"/>
</dbReference>
<dbReference type="GO" id="GO:0048511">
    <property type="term" value="P:rhythmic process"/>
    <property type="evidence" value="ECO:0007669"/>
    <property type="project" value="UniProtKB-KW"/>
</dbReference>
<dbReference type="GO" id="GO:0006939">
    <property type="term" value="P:smooth muscle contraction"/>
    <property type="evidence" value="ECO:0007669"/>
    <property type="project" value="InterPro"/>
</dbReference>
<dbReference type="CDD" id="cd20875">
    <property type="entry name" value="C1_ROCK2"/>
    <property type="match status" value="1"/>
</dbReference>
<dbReference type="CDD" id="cd11638">
    <property type="entry name" value="HR1_ROCK2"/>
    <property type="match status" value="1"/>
</dbReference>
<dbReference type="CDD" id="cd01242">
    <property type="entry name" value="PH_ROCK"/>
    <property type="match status" value="1"/>
</dbReference>
<dbReference type="CDD" id="cd22250">
    <property type="entry name" value="ROCK_SBD"/>
    <property type="match status" value="1"/>
</dbReference>
<dbReference type="CDD" id="cd05621">
    <property type="entry name" value="STKc_ROCK2"/>
    <property type="match status" value="1"/>
</dbReference>
<dbReference type="FunFam" id="1.10.510.10:FF:000047">
    <property type="entry name" value="Rho-associated protein kinase 1"/>
    <property type="match status" value="1"/>
</dbReference>
<dbReference type="FunFam" id="3.30.60.20:FF:000036">
    <property type="entry name" value="Rho-associated protein kinase 1"/>
    <property type="match status" value="1"/>
</dbReference>
<dbReference type="FunFam" id="1.20.5.340:FF:000016">
    <property type="entry name" value="Rho-associated protein kinase 2"/>
    <property type="match status" value="1"/>
</dbReference>
<dbReference type="FunFam" id="2.30.29.30:FF:000033">
    <property type="entry name" value="Rho-associated protein kinase 2"/>
    <property type="match status" value="1"/>
</dbReference>
<dbReference type="FunFam" id="3.30.200.20:FF:000072">
    <property type="entry name" value="Rho-associated protein kinase 2"/>
    <property type="match status" value="1"/>
</dbReference>
<dbReference type="FunFam" id="1.20.5.730:FF:000001">
    <property type="entry name" value="rho-associated protein kinase 2"/>
    <property type="match status" value="1"/>
</dbReference>
<dbReference type="FunFam" id="3.30.200.20:FF:001759">
    <property type="entry name" value="Rho-associated, coiled-coil-containing protein kinase 2b"/>
    <property type="match status" value="1"/>
</dbReference>
<dbReference type="Gene3D" id="1.20.5.340">
    <property type="match status" value="1"/>
</dbReference>
<dbReference type="Gene3D" id="3.30.60.20">
    <property type="match status" value="1"/>
</dbReference>
<dbReference type="Gene3D" id="3.30.200.20">
    <property type="entry name" value="Phosphorylase Kinase, domain 1"/>
    <property type="match status" value="1"/>
</dbReference>
<dbReference type="Gene3D" id="2.30.29.30">
    <property type="entry name" value="Pleckstrin-homology domain (PH domain)/Phosphotyrosine-binding domain (PTB)"/>
    <property type="match status" value="2"/>
</dbReference>
<dbReference type="Gene3D" id="1.20.5.730">
    <property type="entry name" value="Single helix bin"/>
    <property type="match status" value="1"/>
</dbReference>
<dbReference type="Gene3D" id="1.10.510.10">
    <property type="entry name" value="Transferase(Phosphotransferase) domain 1"/>
    <property type="match status" value="1"/>
</dbReference>
<dbReference type="InterPro" id="IPR000961">
    <property type="entry name" value="AGC-kinase_C"/>
</dbReference>
<dbReference type="InterPro" id="IPR046349">
    <property type="entry name" value="C1-like_sf"/>
</dbReference>
<dbReference type="InterPro" id="IPR011072">
    <property type="entry name" value="HR1_rho-bd"/>
</dbReference>
<dbReference type="InterPro" id="IPR011009">
    <property type="entry name" value="Kinase-like_dom_sf"/>
</dbReference>
<dbReference type="InterPro" id="IPR002219">
    <property type="entry name" value="PE/DAG-bd"/>
</dbReference>
<dbReference type="InterPro" id="IPR011993">
    <property type="entry name" value="PH-like_dom_sf"/>
</dbReference>
<dbReference type="InterPro" id="IPR001849">
    <property type="entry name" value="PH_domain"/>
</dbReference>
<dbReference type="InterPro" id="IPR000719">
    <property type="entry name" value="Prot_kinase_dom"/>
</dbReference>
<dbReference type="InterPro" id="IPR017441">
    <property type="entry name" value="Protein_kinase_ATP_BS"/>
</dbReference>
<dbReference type="InterPro" id="IPR050839">
    <property type="entry name" value="Rho-assoc_Ser/Thr_Kinase"/>
</dbReference>
<dbReference type="InterPro" id="IPR020684">
    <property type="entry name" value="ROCK1/ROCK2"/>
</dbReference>
<dbReference type="InterPro" id="IPR029878">
    <property type="entry name" value="ROCK2_cat"/>
</dbReference>
<dbReference type="InterPro" id="IPR037311">
    <property type="entry name" value="ROCK2_HR1"/>
</dbReference>
<dbReference type="InterPro" id="IPR015008">
    <property type="entry name" value="ROCK_Rho-bd_dom"/>
</dbReference>
<dbReference type="InterPro" id="IPR008271">
    <property type="entry name" value="Ser/Thr_kinase_AS"/>
</dbReference>
<dbReference type="PANTHER" id="PTHR22988">
    <property type="entry name" value="MYOTONIC DYSTROPHY S/T KINASE-RELATED"/>
    <property type="match status" value="1"/>
</dbReference>
<dbReference type="PANTHER" id="PTHR22988:SF28">
    <property type="entry name" value="RHO-ASSOCIATED PROTEIN KINASE 2"/>
    <property type="match status" value="1"/>
</dbReference>
<dbReference type="Pfam" id="PF25346">
    <property type="entry name" value="PH_MRCK"/>
    <property type="match status" value="1"/>
</dbReference>
<dbReference type="Pfam" id="PF00069">
    <property type="entry name" value="Pkinase"/>
    <property type="match status" value="1"/>
</dbReference>
<dbReference type="Pfam" id="PF08912">
    <property type="entry name" value="Rho_Binding"/>
    <property type="match status" value="1"/>
</dbReference>
<dbReference type="PIRSF" id="PIRSF037568">
    <property type="entry name" value="Rho_kinase"/>
    <property type="match status" value="1"/>
</dbReference>
<dbReference type="SMART" id="SM00109">
    <property type="entry name" value="C1"/>
    <property type="match status" value="1"/>
</dbReference>
<dbReference type="SMART" id="SM00233">
    <property type="entry name" value="PH"/>
    <property type="match status" value="1"/>
</dbReference>
<dbReference type="SMART" id="SM00133">
    <property type="entry name" value="S_TK_X"/>
    <property type="match status" value="1"/>
</dbReference>
<dbReference type="SMART" id="SM00220">
    <property type="entry name" value="S_TKc"/>
    <property type="match status" value="1"/>
</dbReference>
<dbReference type="SUPFAM" id="SSF57889">
    <property type="entry name" value="Cysteine-rich domain"/>
    <property type="match status" value="1"/>
</dbReference>
<dbReference type="SUPFAM" id="SSF103652">
    <property type="entry name" value="G protein-binding domain"/>
    <property type="match status" value="1"/>
</dbReference>
<dbReference type="SUPFAM" id="SSF50729">
    <property type="entry name" value="PH domain-like"/>
    <property type="match status" value="1"/>
</dbReference>
<dbReference type="SUPFAM" id="SSF56112">
    <property type="entry name" value="Protein kinase-like (PK-like)"/>
    <property type="match status" value="1"/>
</dbReference>
<dbReference type="PROSITE" id="PS51285">
    <property type="entry name" value="AGC_KINASE_CTER"/>
    <property type="match status" value="1"/>
</dbReference>
<dbReference type="PROSITE" id="PS50003">
    <property type="entry name" value="PH_DOMAIN"/>
    <property type="match status" value="1"/>
</dbReference>
<dbReference type="PROSITE" id="PS00107">
    <property type="entry name" value="PROTEIN_KINASE_ATP"/>
    <property type="match status" value="1"/>
</dbReference>
<dbReference type="PROSITE" id="PS50011">
    <property type="entry name" value="PROTEIN_KINASE_DOM"/>
    <property type="match status" value="1"/>
</dbReference>
<dbReference type="PROSITE" id="PS00108">
    <property type="entry name" value="PROTEIN_KINASE_ST"/>
    <property type="match status" value="1"/>
</dbReference>
<dbReference type="PROSITE" id="PS51860">
    <property type="entry name" value="REM_1"/>
    <property type="match status" value="1"/>
</dbReference>
<dbReference type="PROSITE" id="PS51859">
    <property type="entry name" value="RHO_BD"/>
    <property type="match status" value="1"/>
</dbReference>
<dbReference type="PROSITE" id="PS50081">
    <property type="entry name" value="ZF_DAG_PE_2"/>
    <property type="match status" value="1"/>
</dbReference>
<protein>
    <recommendedName>
        <fullName>Rho-associated protein kinase 2</fullName>
        <ecNumber>2.7.11.1</ecNumber>
    </recommendedName>
    <alternativeName>
        <fullName>Rho-associated, coiled-coil-containing protein kinase 2</fullName>
    </alternativeName>
    <alternativeName>
        <fullName>Rho-associated, coiled-coil-containing protein kinase II</fullName>
        <shortName>ROCK-II</shortName>
    </alternativeName>
    <alternativeName>
        <fullName>RhoA-binding kinase 2</fullName>
    </alternativeName>
    <alternativeName>
        <fullName>p150 ROK-alpha</fullName>
        <shortName>ROKalpha</shortName>
    </alternativeName>
    <alternativeName>
        <fullName>p164 ROCK-2</fullName>
    </alternativeName>
</protein>
<proteinExistence type="evidence at protein level"/>
<gene>
    <name type="primary">Rock2</name>
</gene>
<name>ROCK2_RAT</name>
<comment type="function">
    <text evidence="17 18 19 20 21">Protein kinase which is a key regulator of actin cytoskeleton and cell polarity. Involved in regulation of smooth muscle contraction, actin cytoskeleton organization, stress fiber and focal adhesion formation, neurite retraction, cell adhesion and motility via phosphorylation of ADD1, BRCA2, CNN1, EZR, DPYSL2, EP300, MSN, MYL9/MLC2, NPM1, RDX, PPP1R12A and VIM. Phosphorylates SORL1 and IRF4. Acts as a negative regulator of VEGF-induced angiogenic endothelial cell activation. Positively regulates the activation of p42/MAPK1-p44/MAPK3 and of p90RSK/RPS6KA1 during myogenic differentiation. Plays an important role in the timely initiation of centrosome duplication. Inhibits keratinocyte terminal differentiation. May regulate closure of the eyelids and ventral body wall through organization of actomyosin bundles. Plays a critical role in the regulation of spine and synaptic properties in the hippocampus. Plays a role in placental homeostasis during the perinatal period. Plays an important role in generating the circadian rhythm of the aortic myofilament Ca(2+) sensitivity and vascular contractility by modulating the myosin light chain phosphorylation.</text>
</comment>
<comment type="catalytic activity">
    <reaction>
        <text>L-seryl-[protein] + ATP = O-phospho-L-seryl-[protein] + ADP + H(+)</text>
        <dbReference type="Rhea" id="RHEA:17989"/>
        <dbReference type="Rhea" id="RHEA-COMP:9863"/>
        <dbReference type="Rhea" id="RHEA-COMP:11604"/>
        <dbReference type="ChEBI" id="CHEBI:15378"/>
        <dbReference type="ChEBI" id="CHEBI:29999"/>
        <dbReference type="ChEBI" id="CHEBI:30616"/>
        <dbReference type="ChEBI" id="CHEBI:83421"/>
        <dbReference type="ChEBI" id="CHEBI:456216"/>
        <dbReference type="EC" id="2.7.11.1"/>
    </reaction>
</comment>
<comment type="catalytic activity">
    <reaction>
        <text>L-threonyl-[protein] + ATP = O-phospho-L-threonyl-[protein] + ADP + H(+)</text>
        <dbReference type="Rhea" id="RHEA:46608"/>
        <dbReference type="Rhea" id="RHEA-COMP:11060"/>
        <dbReference type="Rhea" id="RHEA-COMP:11605"/>
        <dbReference type="ChEBI" id="CHEBI:15378"/>
        <dbReference type="ChEBI" id="CHEBI:30013"/>
        <dbReference type="ChEBI" id="CHEBI:30616"/>
        <dbReference type="ChEBI" id="CHEBI:61977"/>
        <dbReference type="ChEBI" id="CHEBI:456216"/>
        <dbReference type="EC" id="2.7.11.1"/>
    </reaction>
</comment>
<comment type="cofactor">
    <cofactor evidence="1">
        <name>Mg(2+)</name>
        <dbReference type="ChEBI" id="CHEBI:18420"/>
    </cofactor>
</comment>
<comment type="activity regulation">
    <text>Activated by RHOA binding. Inhibited by Y-27632.</text>
</comment>
<comment type="subunit">
    <text evidence="2 3 4 14 15 17 19 20">Homodimer (By similarity). Interacts with IRS1 (PubMed:11739394). Interacts with RAF1 (PubMed:15753127). Interacts with RHOA (activated by GTP), RHOB, RHOC (PubMed:7493923, PubMed:8816443). Interacts with PPP1R12A (PubMed:19131646). Interacts with EP300 (By similarity). Interacts with CHORDC1 (By similarity). Interacts with BRCA2 (By similarity). Interacts with NPM1; this interaction enhances its activity (By similarity). Interacts with SORL1 (By similarity). Interacts with PJVK (By similarity).</text>
</comment>
<comment type="interaction">
    <interactant intactId="EBI-1569209">
        <id>Q62868</id>
    </interactant>
    <interactant intactId="EBI-354418">
        <id>P19105</id>
        <label>MYL12A</label>
    </interactant>
    <organismsDiffer>true</organismsDiffer>
    <experiments>2</experiments>
</comment>
<comment type="subcellular location">
    <subcellularLocation>
        <location>Cytoplasm</location>
    </subcellularLocation>
    <subcellularLocation>
        <location>Cell membrane</location>
        <topology>Peripheral membrane protein</topology>
    </subcellularLocation>
    <subcellularLocation>
        <location evidence="1">Nucleus</location>
    </subcellularLocation>
    <subcellularLocation>
        <location evidence="1">Cytoplasm</location>
        <location evidence="1">Cytoskeleton</location>
        <location evidence="1">Microtubule organizing center</location>
        <location evidence="1">Centrosome</location>
    </subcellularLocation>
    <text>Cytoplasmic, and associated with actin microfilaments and the plasma membrane.</text>
</comment>
<comment type="tissue specificity">
    <text evidence="20">Highly expressed in brain, lung, liver, skeletal muscle, kidney and testis.</text>
</comment>
<comment type="domain">
    <text evidence="16">An interaction between Thr-414 and Asp-48 is essential for kinase activity and dimerization.</text>
</comment>
<comment type="PTM">
    <text evidence="1">Autophosphorylated. Phosphorylation at Tyr-722 reduces its binding to RHOA and is crucial for focal adhesion dynamics. Dephosphorylation by PTPN11 stimulates its RHOA binding activity (By similarity).</text>
</comment>
<comment type="PTM">
    <text>Cleaved by granzyme B during apoptosis. This leads to constitutive activation of the kinase and membrane blebbing.</text>
</comment>
<comment type="disease">
    <text>May play a role in hypertension. ROCK-inhibitors lower the blood pressure in spontaneous hypertensive, renal hypertensive and deoxycorticosterone acetate-induced hypertensive rats, but not in normal rats.</text>
</comment>
<comment type="similarity">
    <text evidence="22">Belongs to the protein kinase superfamily. AGC Ser/Thr protein kinase family.</text>
</comment>
<comment type="sequence caution" evidence="22">
    <conflict type="erroneous initiation">
        <sequence resource="EMBL-CDS" id="AAB37540"/>
    </conflict>
    <text>Truncated N-terminus.</text>
</comment>
<evidence type="ECO:0000250" key="1"/>
<evidence type="ECO:0000250" key="2">
    <source>
        <dbReference type="UniProtKB" id="O75116"/>
    </source>
</evidence>
<evidence type="ECO:0000250" key="3">
    <source>
        <dbReference type="UniProtKB" id="P70336"/>
    </source>
</evidence>
<evidence type="ECO:0000250" key="4">
    <source>
        <dbReference type="UniProtKB" id="Q28021"/>
    </source>
</evidence>
<evidence type="ECO:0000255" key="5"/>
<evidence type="ECO:0000255" key="6">
    <source>
        <dbReference type="PROSITE-ProRule" id="PRU00145"/>
    </source>
</evidence>
<evidence type="ECO:0000255" key="7">
    <source>
        <dbReference type="PROSITE-ProRule" id="PRU00159"/>
    </source>
</evidence>
<evidence type="ECO:0000255" key="8">
    <source>
        <dbReference type="PROSITE-ProRule" id="PRU00226"/>
    </source>
</evidence>
<evidence type="ECO:0000255" key="9">
    <source>
        <dbReference type="PROSITE-ProRule" id="PRU00618"/>
    </source>
</evidence>
<evidence type="ECO:0000255" key="10">
    <source>
        <dbReference type="PROSITE-ProRule" id="PRU01206"/>
    </source>
</evidence>
<evidence type="ECO:0000255" key="11">
    <source>
        <dbReference type="PROSITE-ProRule" id="PRU01207"/>
    </source>
</evidence>
<evidence type="ECO:0000255" key="12">
    <source>
        <dbReference type="PROSITE-ProRule" id="PRU10027"/>
    </source>
</evidence>
<evidence type="ECO:0000256" key="13">
    <source>
        <dbReference type="SAM" id="MobiDB-lite"/>
    </source>
</evidence>
<evidence type="ECO:0000269" key="14">
    <source>
    </source>
</evidence>
<evidence type="ECO:0000269" key="15">
    <source>
    </source>
</evidence>
<evidence type="ECO:0000269" key="16">
    <source>
    </source>
</evidence>
<evidence type="ECO:0000269" key="17">
    <source>
    </source>
</evidence>
<evidence type="ECO:0000269" key="18">
    <source>
    </source>
</evidence>
<evidence type="ECO:0000269" key="19">
    <source>
    </source>
</evidence>
<evidence type="ECO:0000269" key="20">
    <source>
    </source>
</evidence>
<evidence type="ECO:0000269" key="21">
    <source>
    </source>
</evidence>
<evidence type="ECO:0000305" key="22"/>
<evidence type="ECO:0007829" key="23">
    <source>
        <dbReference type="PDB" id="2ROV"/>
    </source>
</evidence>
<evidence type="ECO:0007829" key="24">
    <source>
        <dbReference type="PDB" id="2ROW"/>
    </source>
</evidence>
<keyword id="KW-0002">3D-structure</keyword>
<keyword id="KW-0067">ATP-binding</keyword>
<keyword id="KW-0090">Biological rhythms</keyword>
<keyword id="KW-1003">Cell membrane</keyword>
<keyword id="KW-0175">Coiled coil</keyword>
<keyword id="KW-0963">Cytoplasm</keyword>
<keyword id="KW-0206">Cytoskeleton</keyword>
<keyword id="KW-0418">Kinase</keyword>
<keyword id="KW-0460">Magnesium</keyword>
<keyword id="KW-0472">Membrane</keyword>
<keyword id="KW-0479">Metal-binding</keyword>
<keyword id="KW-0547">Nucleotide-binding</keyword>
<keyword id="KW-0539">Nucleus</keyword>
<keyword id="KW-0597">Phosphoprotein</keyword>
<keyword id="KW-1185">Reference proteome</keyword>
<keyword id="KW-0723">Serine/threonine-protein kinase</keyword>
<keyword id="KW-0808">Transferase</keyword>
<keyword id="KW-0862">Zinc</keyword>
<keyword id="KW-0863">Zinc-finger</keyword>
<sequence>MSRPPPTGKMPGAPEAAAGDGAGAGRQRKLEALIRDPRSPINVESLLDGLNSLVLDLDFPALRKNKNIDNFLNRYEKIVKKIRGLQMKAEDYDVVKVIGRGAFGEVQLVRHKASQKVYAMKLLSKFEMIKRSDSAFFWEERDIMAFANSPWVVQLFCAFQDDRYLYMVMEYMPGGDLVNLMSNYDVPEKWAKFYTAEVVLALDAIHSMGLIHRDVKPDNMLLDKHGHLKLADFGTCMKMDETGMVHCDTAVGTPDYISPEVLKSQGGDGYYGRECDWWSVGVFLFEMLVGDTPFYADSLVGTYSKIMDHKNSLCFPEDTEISKHAKNLICAFLTDREVRLGRNGVEEIKSASFFKNDQWNWDNIRETAAPVVPELSSDIDSSNFDDIEDDKGDVETFPIPKAFVGNQLPFIGFTYFRENLLLSDSPPCRENDAIQTRKSEESQEIQKKLYALEEHLSSEVQAKEELEQKCKSINTRLEKTAKELEEEITFRKNVESTLRQLEREKALLQHKNAEYQRKADHEADKKRNLENDVNSLKDQLEDLKKRNQSSQISTEKVNQLQKQLDEANALLRTESDTAARLRKTQAESSKQIQQLESNNRDLQDKNCLLETAKLKLEKEFINLQSALESERRDRTHGSEIINDLQGRISGLEEDLKTGKTLLAKVELEKRQLQEKLTDLEKEKSNMEIDMTYQLKVIQQSLEQEEAEHKTTKARLADKNKIYESIEEAKSEAMKEMEKKLLEERSLKQKVENLLLEAEKRCSILDCDLKQSQQKLNELLKQKDVLNEDVRNLTLKIEQETQKRCLMQNDLKMQTQQVNTLKMSEKQIKQENNHLMEMKMNLEKQNAELRKERQDADGQMKELQDQLEAEQYFSTLYKTQVRELKEENEEKTKLCKELQQKKQDLQDERDSLAAQLEITLTKADSEQLARSIAEEQYSDLEKEKIMKELEIKEMMARHKQELTEKDATIASLEETNRTLTSDVANLANEKEELNNKLKDTQEQLSKLKDEEISAAAIKAQFEKQLLTERTLKTQAVNKLAEIMNRKEPVKRGSDTDVRRKEKENRKLHMELKSEREKLTQQMIKYQKELNEMQAQIAEESQIRIELQMTLDSKDSDIEQLRSQLQALHIGMDSSSIGSGPGDAEPDDGFPESRLEGWLSLPVRNNTKKFGWVKKYVIVSSKKILFYDSEQDKEQSNPYMVLDIDKLFHVRPVTQTDVYRADAKEIPRIFQILYANEGESKKEPEFPVEPVGEKSNYICHKGHEFIPTLYHFPTNCEACMKPLWHMFKPPPALECSRCHIKCHKDHMDKKEEIIAPCKVYYDISSAKNLLLLANSTEEQQKWVSRLVKKIPKKPPAPDPFARSSPRTSMKIQQNQSIRRPSRQLAPNKPS</sequence>
<feature type="chain" id="PRO_0000086627" description="Rho-associated protein kinase 2">
    <location>
        <begin position="1"/>
        <end position="1388"/>
    </location>
</feature>
<feature type="domain" description="Protein kinase" evidence="7">
    <location>
        <begin position="92"/>
        <end position="354"/>
    </location>
</feature>
<feature type="domain" description="AGC-kinase C-terminal" evidence="9">
    <location>
        <begin position="357"/>
        <end position="425"/>
    </location>
</feature>
<feature type="domain" description="REM-1" evidence="11">
    <location>
        <begin position="497"/>
        <end position="573"/>
    </location>
</feature>
<feature type="domain" description="RhoBD" evidence="10">
    <location>
        <begin position="979"/>
        <end position="1047"/>
    </location>
</feature>
<feature type="domain" description="PH" evidence="6">
    <location>
        <begin position="1150"/>
        <end position="1349"/>
    </location>
</feature>
<feature type="zinc finger region" description="Phorbol-ester/DAG-type" evidence="8">
    <location>
        <begin position="1260"/>
        <end position="1315"/>
    </location>
</feature>
<feature type="region of interest" description="Disordered" evidence="13">
    <location>
        <begin position="1"/>
        <end position="24"/>
    </location>
</feature>
<feature type="region of interest" description="Interaction with PPP1R12A" evidence="17">
    <location>
        <begin position="363"/>
        <end position="784"/>
    </location>
</feature>
<feature type="region of interest" description="Interaction with NPM1" evidence="1">
    <location>
        <begin position="373"/>
        <end position="420"/>
    </location>
</feature>
<feature type="region of interest" description="Disordered" evidence="13">
    <location>
        <begin position="513"/>
        <end position="532"/>
    </location>
</feature>
<feature type="region of interest" description="RHOA binding" evidence="1">
    <location>
        <begin position="979"/>
        <end position="1047"/>
    </location>
</feature>
<feature type="region of interest" description="Disordered" evidence="13">
    <location>
        <begin position="1345"/>
        <end position="1388"/>
    </location>
</feature>
<feature type="coiled-coil region" evidence="5">
    <location>
        <begin position="439"/>
        <end position="1024"/>
    </location>
</feature>
<feature type="coiled-coil region" evidence="5">
    <location>
        <begin position="1052"/>
        <end position="1131"/>
    </location>
</feature>
<feature type="compositionally biased region" description="Basic and acidic residues" evidence="13">
    <location>
        <begin position="513"/>
        <end position="530"/>
    </location>
</feature>
<feature type="compositionally biased region" description="Polar residues" evidence="13">
    <location>
        <begin position="1362"/>
        <end position="1376"/>
    </location>
</feature>
<feature type="active site" description="Proton acceptor" evidence="7 12">
    <location>
        <position position="214"/>
    </location>
</feature>
<feature type="binding site" evidence="7">
    <location>
        <begin position="98"/>
        <end position="106"/>
    </location>
    <ligand>
        <name>ATP</name>
        <dbReference type="ChEBI" id="CHEBI:30616"/>
    </ligand>
</feature>
<feature type="binding site" evidence="7">
    <location>
        <position position="121"/>
    </location>
    <ligand>
        <name>ATP</name>
        <dbReference type="ChEBI" id="CHEBI:30616"/>
    </ligand>
</feature>
<feature type="site" description="Cleavage; by granzyme B">
    <location>
        <begin position="1131"/>
        <end position="1132"/>
    </location>
</feature>
<feature type="modified residue" description="Phosphothreonine; by ROCK2" evidence="16">
    <location>
        <position position="414"/>
    </location>
</feature>
<feature type="modified residue" description="Phosphotyrosine; by SRC" evidence="2">
    <location>
        <position position="722"/>
    </location>
</feature>
<feature type="modified residue" description="Phosphoserine" evidence="2">
    <location>
        <position position="1137"/>
    </location>
</feature>
<feature type="modified residue" description="Phosphothreonine" evidence="2">
    <location>
        <position position="1212"/>
    </location>
</feature>
<feature type="modified residue" description="Phosphoserine" evidence="2">
    <location>
        <position position="1362"/>
    </location>
</feature>
<feature type="modified residue" description="Phosphoserine" evidence="2">
    <location>
        <position position="1374"/>
    </location>
</feature>
<feature type="mutagenesis site" description="Loss of kinase activity; autophosphorylation and dimerization." evidence="16">
    <original>D</original>
    <variation>A</variation>
    <location>
        <position position="48"/>
    </location>
</feature>
<feature type="mutagenesis site" description="Loss of kinase activity." evidence="16 20">
    <original>K</original>
    <variation>A</variation>
    <location>
        <position position="121"/>
    </location>
</feature>
<feature type="mutagenesis site" description="Loss of autophosphorylation." evidence="16 20">
    <original>K</original>
    <variation>M</variation>
    <location>
        <position position="121"/>
    </location>
</feature>
<feature type="mutagenesis site" description="Loss of kinase activity; autophosphorylation and dimerization." evidence="16">
    <original>T</original>
    <variation>A</variation>
    <location>
        <position position="414"/>
    </location>
</feature>
<feature type="mutagenesis site" description="Increased activity and autophosphorylation." evidence="16">
    <original>W</original>
    <variation>A</variation>
    <location>
        <position position="1170"/>
    </location>
</feature>
<feature type="strand" evidence="23">
    <location>
        <begin position="1153"/>
        <end position="1158"/>
    </location>
</feature>
<feature type="strand" evidence="23">
    <location>
        <begin position="1163"/>
        <end position="1166"/>
    </location>
</feature>
<feature type="strand" evidence="23">
    <location>
        <begin position="1172"/>
        <end position="1178"/>
    </location>
</feature>
<feature type="strand" evidence="23">
    <location>
        <begin position="1181"/>
        <end position="1186"/>
    </location>
</feature>
<feature type="helix" evidence="23">
    <location>
        <begin position="1188"/>
        <end position="1192"/>
    </location>
</feature>
<feature type="strand" evidence="23">
    <location>
        <begin position="1197"/>
        <end position="1200"/>
    </location>
</feature>
<feature type="helix" evidence="23">
    <location>
        <begin position="1202"/>
        <end position="1204"/>
    </location>
</feature>
<feature type="strand" evidence="23">
    <location>
        <begin position="1205"/>
        <end position="1210"/>
    </location>
</feature>
<feature type="turn" evidence="23">
    <location>
        <begin position="1213"/>
        <end position="1215"/>
    </location>
</feature>
<feature type="strand" evidence="23">
    <location>
        <begin position="1217"/>
        <end position="1219"/>
    </location>
</feature>
<feature type="turn" evidence="23">
    <location>
        <begin position="1221"/>
        <end position="1223"/>
    </location>
</feature>
<feature type="helix" evidence="23">
    <location>
        <begin position="1224"/>
        <end position="1226"/>
    </location>
</feature>
<feature type="strand" evidence="23">
    <location>
        <begin position="1227"/>
        <end position="1232"/>
    </location>
</feature>
<feature type="strand" evidence="23">
    <location>
        <begin position="1234"/>
        <end position="1236"/>
    </location>
</feature>
<feature type="strand" evidence="24">
    <location>
        <begin position="1256"/>
        <end position="1258"/>
    </location>
</feature>
<feature type="strand" evidence="24">
    <location>
        <begin position="1261"/>
        <end position="1266"/>
    </location>
</feature>
<feature type="strand" evidence="24">
    <location>
        <begin position="1275"/>
        <end position="1281"/>
    </location>
</feature>
<feature type="strand" evidence="24">
    <location>
        <begin position="1284"/>
        <end position="1286"/>
    </location>
</feature>
<feature type="strand" evidence="24">
    <location>
        <begin position="1290"/>
        <end position="1296"/>
    </location>
</feature>
<feature type="strand" evidence="24">
    <location>
        <begin position="1299"/>
        <end position="1301"/>
    </location>
</feature>
<feature type="helix" evidence="24">
    <location>
        <begin position="1302"/>
        <end position="1307"/>
    </location>
</feature>
<feature type="turn" evidence="24">
    <location>
        <begin position="1317"/>
        <end position="1319"/>
    </location>
</feature>
<feature type="strand" evidence="23">
    <location>
        <begin position="1325"/>
        <end position="1330"/>
    </location>
</feature>
<feature type="helix" evidence="23">
    <location>
        <begin position="1334"/>
        <end position="1347"/>
    </location>
</feature>
<reference key="1">
    <citation type="journal article" date="1995" name="J. Biol. Chem.">
        <title>A novel serine/threonine kinase binding the Ras-related RhoA GTPase which translocates the kinase to peripheral membranes.</title>
        <authorList>
            <person name="Leung T."/>
            <person name="Manser E."/>
            <person name="Tan L."/>
            <person name="Lim L."/>
        </authorList>
    </citation>
    <scope>NUCLEOTIDE SEQUENCE [MRNA]</scope>
    <scope>FUNCTION</scope>
    <scope>AUTOPHOSPHORYLATION</scope>
    <scope>INTERACTION WITH RHOA</scope>
    <scope>SUBCELLULAR LOCATION</scope>
    <source>
        <tissue>Brain</tissue>
    </source>
</reference>
<reference key="2">
    <citation type="journal article" date="1996" name="Mol. Cell. Biol.">
        <title>The p160 RhoA-binding kinase ROK alpha is a member of a kinase family and is involved in the reorganization of the cytoskeleton.</title>
        <authorList>
            <person name="Leung T."/>
            <person name="Chen X.-Q."/>
            <person name="Manser E."/>
            <person name="Lim L."/>
        </authorList>
    </citation>
    <scope>FUNCTION</scope>
    <scope>AUTOPHOSPHORYLATION</scope>
    <scope>INTERACTION WITH RHOA; RHOB AND RHOC</scope>
    <scope>MUTAGENESIS OF LYS-121</scope>
    <scope>TISSUE SPECIFICITY</scope>
</reference>
<reference key="3">
    <citation type="journal article" date="1997" name="Nature">
        <title>Calcium sensitization of smooth muscle mediated by a Rho-associated protein kinase in hypertension.</title>
        <authorList>
            <person name="Uehata M."/>
            <person name="Ishizaki T."/>
            <person name="Satoh H."/>
            <person name="Ono T."/>
            <person name="Kawahara T."/>
            <person name="Morishita T."/>
            <person name="Tamakawa H."/>
            <person name="Yamagami K."/>
            <person name="Inui J."/>
            <person name="Maekawa M."/>
            <person name="Narumiya S."/>
        </authorList>
    </citation>
    <scope>FUNCTION</scope>
    <scope>ROLE IN HYPERTENSION</scope>
    <scope>INHIBITION BY Y-27632</scope>
</reference>
<reference key="4">
    <citation type="journal article" date="2002" name="J. Biol. Chem.">
        <title>Active Rho kinase (ROK-alpha) associates with insulin receptor substrate-1 and inhibits insulin signaling in vascular smooth muscle cells.</title>
        <authorList>
            <person name="Begum N."/>
            <person name="Sandu O.A."/>
            <person name="Ito M."/>
            <person name="Lohmann S.M."/>
            <person name="Smolenski A."/>
        </authorList>
    </citation>
    <scope>INTERACTION WITH IRS1</scope>
</reference>
<reference key="5">
    <citation type="journal article" date="2005" name="J. Cell Biol.">
        <title>Raf-1 regulates Rho signaling and cell migration.</title>
        <authorList>
            <person name="Ehrenreiter K."/>
            <person name="Piazzolla D."/>
            <person name="Velamoor V."/>
            <person name="Sobczak I."/>
            <person name="Small J.V."/>
            <person name="Takeda J."/>
            <person name="Leung T."/>
            <person name="Baccarini M."/>
        </authorList>
    </citation>
    <scope>INTERACTION WITH RAF1</scope>
</reference>
<reference key="6">
    <citation type="journal article" date="2005" name="J. Exp. Med.">
        <title>Direct cleavage of ROCK II by granzyme B induces target cell membrane blebbing in a caspase-independent manner.</title>
        <authorList>
            <person name="Sebbagh M."/>
            <person name="Hamelin J."/>
            <person name="Bertoglio J."/>
            <person name="Solary E."/>
            <person name="Breard J."/>
        </authorList>
    </citation>
    <scope>CLEAVAGE BY GRANZYME B</scope>
</reference>
<reference key="7">
    <citation type="journal article" date="2009" name="Biochem. J.">
        <title>The hydrophobic motif of ROCK2 requires association with the N-terminal extension for kinase activity.</title>
        <authorList>
            <person name="Couzens A.L."/>
            <person name="Saridakis V."/>
            <person name="Scheid M.P."/>
        </authorList>
    </citation>
    <scope>DOMAIN</scope>
    <scope>PHOSPHORYLATION AT THR-414</scope>
    <scope>MUTAGENESIS OF ASP-48; LYS-121; THR-414 AND TRP-1170</scope>
</reference>
<reference key="8">
    <citation type="journal article" date="2009" name="Circ. Res.">
        <title>ROCK isoform regulation of myosin phosphatase and contractility in vascular smooth muscle cells.</title>
        <authorList>
            <person name="Wang Y."/>
            <person name="Zheng X.R."/>
            <person name="Riddick N."/>
            <person name="Bryden M."/>
            <person name="Baur W."/>
            <person name="Zhang X."/>
            <person name="Surks H.K."/>
        </authorList>
    </citation>
    <scope>FUNCTION</scope>
    <scope>INTERACTION WITH PPP1R12A</scope>
    <scope>SUBCELLULAR LOCATION</scope>
</reference>
<reference key="9">
    <citation type="journal article" date="2011" name="FEBS Lett.">
        <title>Chelerythrine perturbs lamellar actomyosin filaments by selective inhibition of myotonic dystrophy kinase-related Cdc42-binding kinase.</title>
        <authorList>
            <person name="Tan I."/>
            <person name="Lai J."/>
            <person name="Yong J."/>
            <person name="Li S.F."/>
            <person name="Leung T."/>
        </authorList>
    </citation>
    <scope>FUNCTION IN PHOSPHORYLATION OF MYL9/MLC2 AND PPP1R12A</scope>
</reference>
<accession>Q62868</accession>
<organism>
    <name type="scientific">Rattus norvegicus</name>
    <name type="common">Rat</name>
    <dbReference type="NCBI Taxonomy" id="10116"/>
    <lineage>
        <taxon>Eukaryota</taxon>
        <taxon>Metazoa</taxon>
        <taxon>Chordata</taxon>
        <taxon>Craniata</taxon>
        <taxon>Vertebrata</taxon>
        <taxon>Euteleostomi</taxon>
        <taxon>Mammalia</taxon>
        <taxon>Eutheria</taxon>
        <taxon>Euarchontoglires</taxon>
        <taxon>Glires</taxon>
        <taxon>Rodentia</taxon>
        <taxon>Myomorpha</taxon>
        <taxon>Muroidea</taxon>
        <taxon>Muridae</taxon>
        <taxon>Murinae</taxon>
        <taxon>Rattus</taxon>
    </lineage>
</organism>